<sequence length="261" mass="30074">MLYYPHIDPVAFRLGPLKVHWYGLMYLVGFAMAWGLALYRARDPKRHWTAQQVGDLIFYGALGLIIGGRLGYMLFYDFSNFIANPLTLFQVWRGGMSFHGGLIGVIVTTWIFSRRTHKRWMDVTDFVVPLVPLGLAAGRIGNFINGELWGRVTTVPWGMVFPNAGPLPRHPSQLYEFLLEGALLFIVIWWFSAKLRPRFAVSSLFLLCYGLFRFTAEFFRQPDPQLGFVAFGWLTRGQELSLPMIIIGGFALWWAYRHKER</sequence>
<protein>
    <recommendedName>
        <fullName evidence="1">Phosphatidylglycerol--prolipoprotein diacylglyceryl transferase</fullName>
        <ecNumber evidence="1">2.5.1.145</ecNumber>
    </recommendedName>
</protein>
<feature type="chain" id="PRO_1000085071" description="Phosphatidylglycerol--prolipoprotein diacylglyceryl transferase">
    <location>
        <begin position="1"/>
        <end position="261"/>
    </location>
</feature>
<feature type="transmembrane region" description="Helical" evidence="1">
    <location>
        <begin position="19"/>
        <end position="39"/>
    </location>
</feature>
<feature type="transmembrane region" description="Helical" evidence="1">
    <location>
        <begin position="56"/>
        <end position="76"/>
    </location>
</feature>
<feature type="transmembrane region" description="Helical" evidence="1">
    <location>
        <begin position="92"/>
        <end position="112"/>
    </location>
</feature>
<feature type="transmembrane region" description="Helical" evidence="1">
    <location>
        <begin position="126"/>
        <end position="146"/>
    </location>
</feature>
<feature type="transmembrane region" description="Helical" evidence="1">
    <location>
        <begin position="173"/>
        <end position="193"/>
    </location>
</feature>
<feature type="transmembrane region" description="Helical" evidence="1">
    <location>
        <begin position="199"/>
        <end position="219"/>
    </location>
</feature>
<feature type="transmembrane region" description="Helical" evidence="1">
    <location>
        <begin position="227"/>
        <end position="247"/>
    </location>
</feature>
<feature type="binding site" evidence="1">
    <location>
        <position position="139"/>
    </location>
    <ligand>
        <name>a 1,2-diacyl-sn-glycero-3-phospho-(1'-sn-glycerol)</name>
        <dbReference type="ChEBI" id="CHEBI:64716"/>
    </ligand>
</feature>
<gene>
    <name evidence="1" type="primary">lgt</name>
    <name type="ordered locus">CBUD_0440</name>
</gene>
<proteinExistence type="inferred from homology"/>
<name>LGT_COXBN</name>
<organism>
    <name type="scientific">Coxiella burnetii (strain Dugway 5J108-111)</name>
    <dbReference type="NCBI Taxonomy" id="434922"/>
    <lineage>
        <taxon>Bacteria</taxon>
        <taxon>Pseudomonadati</taxon>
        <taxon>Pseudomonadota</taxon>
        <taxon>Gammaproteobacteria</taxon>
        <taxon>Legionellales</taxon>
        <taxon>Coxiellaceae</taxon>
        <taxon>Coxiella</taxon>
    </lineage>
</organism>
<accession>A9KF59</accession>
<reference key="1">
    <citation type="journal article" date="2009" name="Infect. Immun.">
        <title>Comparative genomics reveal extensive transposon-mediated genomic plasticity and diversity among potential effector proteins within the genus Coxiella.</title>
        <authorList>
            <person name="Beare P.A."/>
            <person name="Unsworth N."/>
            <person name="Andoh M."/>
            <person name="Voth D.E."/>
            <person name="Omsland A."/>
            <person name="Gilk S.D."/>
            <person name="Williams K.P."/>
            <person name="Sobral B.W."/>
            <person name="Kupko J.J. III"/>
            <person name="Porcella S.F."/>
            <person name="Samuel J.E."/>
            <person name="Heinzen R.A."/>
        </authorList>
    </citation>
    <scope>NUCLEOTIDE SEQUENCE [LARGE SCALE GENOMIC DNA]</scope>
    <source>
        <strain>Dugway 5J108-111</strain>
    </source>
</reference>
<keyword id="KW-0997">Cell inner membrane</keyword>
<keyword id="KW-1003">Cell membrane</keyword>
<keyword id="KW-0472">Membrane</keyword>
<keyword id="KW-0808">Transferase</keyword>
<keyword id="KW-0812">Transmembrane</keyword>
<keyword id="KW-1133">Transmembrane helix</keyword>
<comment type="function">
    <text evidence="1">Catalyzes the transfer of the diacylglyceryl group from phosphatidylglycerol to the sulfhydryl group of the N-terminal cysteine of a prolipoprotein, the first step in the formation of mature lipoproteins.</text>
</comment>
<comment type="catalytic activity">
    <reaction evidence="1">
        <text>L-cysteinyl-[prolipoprotein] + a 1,2-diacyl-sn-glycero-3-phospho-(1'-sn-glycerol) = an S-1,2-diacyl-sn-glyceryl-L-cysteinyl-[prolipoprotein] + sn-glycerol 1-phosphate + H(+)</text>
        <dbReference type="Rhea" id="RHEA:56712"/>
        <dbReference type="Rhea" id="RHEA-COMP:14679"/>
        <dbReference type="Rhea" id="RHEA-COMP:14680"/>
        <dbReference type="ChEBI" id="CHEBI:15378"/>
        <dbReference type="ChEBI" id="CHEBI:29950"/>
        <dbReference type="ChEBI" id="CHEBI:57685"/>
        <dbReference type="ChEBI" id="CHEBI:64716"/>
        <dbReference type="ChEBI" id="CHEBI:140658"/>
        <dbReference type="EC" id="2.5.1.145"/>
    </reaction>
</comment>
<comment type="pathway">
    <text evidence="1">Protein modification; lipoprotein biosynthesis (diacylglyceryl transfer).</text>
</comment>
<comment type="subcellular location">
    <subcellularLocation>
        <location evidence="1">Cell inner membrane</location>
        <topology evidence="1">Multi-pass membrane protein</topology>
    </subcellularLocation>
</comment>
<comment type="similarity">
    <text evidence="1">Belongs to the Lgt family.</text>
</comment>
<dbReference type="EC" id="2.5.1.145" evidence="1"/>
<dbReference type="EMBL" id="CP000733">
    <property type="protein sequence ID" value="ABS77560.1"/>
    <property type="molecule type" value="Genomic_DNA"/>
</dbReference>
<dbReference type="RefSeq" id="WP_011996574.1">
    <property type="nucleotide sequence ID" value="NC_009727.1"/>
</dbReference>
<dbReference type="SMR" id="A9KF59"/>
<dbReference type="KEGG" id="cbd:CBUD_0440"/>
<dbReference type="HOGENOM" id="CLU_013386_1_0_6"/>
<dbReference type="UniPathway" id="UPA00664"/>
<dbReference type="Proteomes" id="UP000008555">
    <property type="component" value="Chromosome"/>
</dbReference>
<dbReference type="GO" id="GO:0005886">
    <property type="term" value="C:plasma membrane"/>
    <property type="evidence" value="ECO:0007669"/>
    <property type="project" value="UniProtKB-SubCell"/>
</dbReference>
<dbReference type="GO" id="GO:0008961">
    <property type="term" value="F:phosphatidylglycerol-prolipoprotein diacylglyceryl transferase activity"/>
    <property type="evidence" value="ECO:0007669"/>
    <property type="project" value="UniProtKB-UniRule"/>
</dbReference>
<dbReference type="GO" id="GO:0042158">
    <property type="term" value="P:lipoprotein biosynthetic process"/>
    <property type="evidence" value="ECO:0007669"/>
    <property type="project" value="UniProtKB-UniRule"/>
</dbReference>
<dbReference type="HAMAP" id="MF_01147">
    <property type="entry name" value="Lgt"/>
    <property type="match status" value="1"/>
</dbReference>
<dbReference type="InterPro" id="IPR001640">
    <property type="entry name" value="Lgt"/>
</dbReference>
<dbReference type="NCBIfam" id="TIGR00544">
    <property type="entry name" value="lgt"/>
    <property type="match status" value="1"/>
</dbReference>
<dbReference type="PANTHER" id="PTHR30589:SF0">
    <property type="entry name" value="PHOSPHATIDYLGLYCEROL--PROLIPOPROTEIN DIACYLGLYCERYL TRANSFERASE"/>
    <property type="match status" value="1"/>
</dbReference>
<dbReference type="PANTHER" id="PTHR30589">
    <property type="entry name" value="PROLIPOPROTEIN DIACYLGLYCERYL TRANSFERASE"/>
    <property type="match status" value="1"/>
</dbReference>
<dbReference type="Pfam" id="PF01790">
    <property type="entry name" value="LGT"/>
    <property type="match status" value="1"/>
</dbReference>
<dbReference type="PROSITE" id="PS01311">
    <property type="entry name" value="LGT"/>
    <property type="match status" value="1"/>
</dbReference>
<evidence type="ECO:0000255" key="1">
    <source>
        <dbReference type="HAMAP-Rule" id="MF_01147"/>
    </source>
</evidence>